<feature type="chain" id="PRO_0000319953" description="Interferon-induced GTP-binding protein Mx1">
    <location>
        <begin position="1"/>
        <end position="660"/>
    </location>
</feature>
<feature type="domain" description="Dynamin-type G" evidence="5">
    <location>
        <begin position="67"/>
        <end position="340"/>
    </location>
</feature>
<feature type="domain" description="GED" evidence="4">
    <location>
        <begin position="572"/>
        <end position="660"/>
    </location>
</feature>
<feature type="region of interest" description="Disordered" evidence="6">
    <location>
        <begin position="1"/>
        <end position="29"/>
    </location>
</feature>
<feature type="region of interest" description="G1 motif" evidence="5">
    <location>
        <begin position="77"/>
        <end position="84"/>
    </location>
</feature>
<feature type="region of interest" description="G2 motif" evidence="5">
    <location>
        <begin position="102"/>
        <end position="104"/>
    </location>
</feature>
<feature type="region of interest" description="G3 motif" evidence="5">
    <location>
        <begin position="178"/>
        <end position="181"/>
    </location>
</feature>
<feature type="region of interest" description="G4 motif" evidence="5">
    <location>
        <begin position="247"/>
        <end position="250"/>
    </location>
</feature>
<feature type="region of interest" description="G5 motif" evidence="5">
    <location>
        <begin position="279"/>
        <end position="282"/>
    </location>
</feature>
<feature type="region of interest" description="Bundle signaling element (BSE)" evidence="1">
    <location>
        <begin position="341"/>
        <end position="366"/>
    </location>
</feature>
<feature type="region of interest" description="Middle domain" evidence="1">
    <location>
        <begin position="366"/>
        <end position="533"/>
    </location>
</feature>
<feature type="region of interest" description="Stalk" evidence="1">
    <location>
        <begin position="367"/>
        <end position="630"/>
    </location>
</feature>
<feature type="region of interest" description="Critical for lipid-binding" evidence="1">
    <location>
        <begin position="554"/>
        <end position="557"/>
    </location>
</feature>
<feature type="compositionally biased region" description="Basic and acidic residues" evidence="6">
    <location>
        <begin position="1"/>
        <end position="10"/>
    </location>
</feature>
<feature type="compositionally biased region" description="Polar residues" evidence="6">
    <location>
        <begin position="12"/>
        <end position="29"/>
    </location>
</feature>
<feature type="binding site" evidence="3">
    <location>
        <begin position="77"/>
        <end position="84"/>
    </location>
    <ligand>
        <name>GTP</name>
        <dbReference type="ChEBI" id="CHEBI:37565"/>
    </ligand>
</feature>
<feature type="binding site" evidence="3">
    <location>
        <begin position="178"/>
        <end position="182"/>
    </location>
    <ligand>
        <name>GTP</name>
        <dbReference type="ChEBI" id="CHEBI:37565"/>
    </ligand>
</feature>
<feature type="binding site" evidence="3">
    <location>
        <begin position="247"/>
        <end position="250"/>
    </location>
    <ligand>
        <name>GTP</name>
        <dbReference type="ChEBI" id="CHEBI:37565"/>
    </ligand>
</feature>
<feature type="modified residue" description="N-acetylmethionine" evidence="2">
    <location>
        <position position="1"/>
    </location>
</feature>
<comment type="function">
    <text evidence="1">Interferon-induced dynamin-like GTPase with antiviral activity.</text>
</comment>
<comment type="subunit">
    <text evidence="1">Homooligomer. Oligomerizes into multimeric filamentous or ring-like structures by virtue of its stalk domain. Oligomerization is critical for GTPase activity, protein stability, and recognition of viral target structures (By similarity). Interacts with TRPC1, TRPC3, TRPC4, TRPC5, TRPC6 and TRPC7 (By similarity). Interacts with HSPA5 (By similarity). Interacts with TUBB/TUBB5 (By similarity). Interacts with DDX39A and DDX39B (By similarity).</text>
</comment>
<comment type="subcellular location">
    <subcellularLocation>
        <location evidence="2">Cytoplasm</location>
    </subcellularLocation>
    <subcellularLocation>
        <location evidence="2">Endoplasmic reticulum membrane</location>
        <topology evidence="2">Peripheral membrane protein</topology>
        <orientation evidence="2">Cytoplasmic side</orientation>
    </subcellularLocation>
    <subcellularLocation>
        <location evidence="2">Cytoplasm</location>
        <location evidence="2">Perinuclear region</location>
    </subcellularLocation>
    <text evidence="2">Binds preferentially to negatively charged phospholipids.</text>
</comment>
<comment type="induction">
    <text evidence="7 8">By type I and type III interferons.</text>
</comment>
<comment type="domain">
    <text evidence="1">The C-terminal GTPase effector domain (GED) is involved in oligomerization and viral target recognition.</text>
</comment>
<comment type="domain">
    <text evidence="1">The middle domain mediates self-assembly and oligomerization.</text>
</comment>
<comment type="PTM">
    <text evidence="1">ISGylated.</text>
</comment>
<comment type="similarity">
    <text evidence="5">Belongs to the TRAFAC class dynamin-like GTPase superfamily. Dynamin/Fzo/YdjA family.</text>
</comment>
<accession>Q28379</accession>
<sequence>MVHSEAKMTRPDSASASKQQLLNGNADIQETNQKRSIEKNLCSQYEEKVRPCIDLIDSLRALGVEQDLALPAIAVIGDQSSGKSSVLEALSGVALPRGSGIVTRCPLVLKLKRLVKEDEWKGKVSYRDIEVEISNALDVEEQVRKAQNVLAGEGVGISQELVTLEVSSPHVPDLTLIDLPGITRVAVGNQPADIGRQIKTLIRKYIQRQETINLVVVPSNVDIATTEALSMAQEVDPEGDRTIGILTKPDLVDKGTEEQVVDVVRNLICHLKKGYMIVKCRGQQDIQDRLSLAEALQREKAFFEENPYFRGLLEEGRASVPCLAERLTTELITHISKSLPLLENQIKESYQNLSDELQKYGTDIPEDETEKTFFLIVKITTFNQNITSFVQGEELVGPNDTRLFNKIRQEFQKWSGVIENNFRKGGEAIRRQIWTFENQYRGRELPGFVNYRTFETIIKQQIQLLEEPAIDMLHRISDLVRDTFTKVSEKNFSEFFNLHRTTKSKLEDIKLEQENEAEKSIRLHFQMEKIVYCQDHVYRGTLQKVRENEMEEEKKKKTINVWGQNTSTESSMAEILEHLNAYQHEAGNRLSTHIPLIIQFFVLQTFGQQLQKSMLQLLQDRDTYDWLLKERNDTCDKRKFLKERLARLAQARRRLAKFPG</sequence>
<protein>
    <recommendedName>
        <fullName>Interferon-induced GTP-binding protein Mx1</fullName>
    </recommendedName>
    <alternativeName>
        <fullName>Interferon-regulated resistance GTP-binding protein MxA</fullName>
    </alternativeName>
    <alternativeName>
        <fullName>Myxoma resistance protein 1</fullName>
    </alternativeName>
    <alternativeName>
        <fullName>Myxovirus resistance protein 1</fullName>
    </alternativeName>
</protein>
<keyword id="KW-0007">Acetylation</keyword>
<keyword id="KW-0051">Antiviral defense</keyword>
<keyword id="KW-0963">Cytoplasm</keyword>
<keyword id="KW-0256">Endoplasmic reticulum</keyword>
<keyword id="KW-0342">GTP-binding</keyword>
<keyword id="KW-0391">Immunity</keyword>
<keyword id="KW-0399">Innate immunity</keyword>
<keyword id="KW-0472">Membrane</keyword>
<keyword id="KW-0547">Nucleotide-binding</keyword>
<keyword id="KW-1185">Reference proteome</keyword>
<keyword id="KW-0832">Ubl conjugation</keyword>
<evidence type="ECO:0000250" key="1"/>
<evidence type="ECO:0000250" key="2">
    <source>
        <dbReference type="UniProtKB" id="P20591"/>
    </source>
</evidence>
<evidence type="ECO:0000255" key="3"/>
<evidence type="ECO:0000255" key="4">
    <source>
        <dbReference type="PROSITE-ProRule" id="PRU00720"/>
    </source>
</evidence>
<evidence type="ECO:0000255" key="5">
    <source>
        <dbReference type="PROSITE-ProRule" id="PRU01055"/>
    </source>
</evidence>
<evidence type="ECO:0000256" key="6">
    <source>
        <dbReference type="SAM" id="MobiDB-lite"/>
    </source>
</evidence>
<evidence type="ECO:0000269" key="7">
    <source>
    </source>
</evidence>
<evidence type="ECO:0000269" key="8">
    <source>
    </source>
</evidence>
<dbReference type="EMBL" id="U55216">
    <property type="protein sequence ID" value="AAC23906.1"/>
    <property type="molecule type" value="mRNA"/>
</dbReference>
<dbReference type="RefSeq" id="NP_001075961.1">
    <property type="nucleotide sequence ID" value="NM_001082492.1"/>
</dbReference>
<dbReference type="SMR" id="Q28379"/>
<dbReference type="FunCoup" id="Q28379">
    <property type="interactions" value="43"/>
</dbReference>
<dbReference type="STRING" id="9796.ENSECAP00000015078"/>
<dbReference type="PaxDb" id="9796-ENSECAP00000015078"/>
<dbReference type="GeneID" id="100034192"/>
<dbReference type="KEGG" id="ecb:100034192"/>
<dbReference type="CTD" id="4599"/>
<dbReference type="InParanoid" id="Q28379"/>
<dbReference type="OrthoDB" id="5061070at2759"/>
<dbReference type="Proteomes" id="UP000002281">
    <property type="component" value="Unplaced"/>
</dbReference>
<dbReference type="GO" id="GO:0005737">
    <property type="term" value="C:cytoplasm"/>
    <property type="evidence" value="ECO:0000250"/>
    <property type="project" value="UniProtKB"/>
</dbReference>
<dbReference type="GO" id="GO:0005789">
    <property type="term" value="C:endoplasmic reticulum membrane"/>
    <property type="evidence" value="ECO:0007669"/>
    <property type="project" value="UniProtKB-SubCell"/>
</dbReference>
<dbReference type="GO" id="GO:0005874">
    <property type="term" value="C:microtubule"/>
    <property type="evidence" value="ECO:0000318"/>
    <property type="project" value="GO_Central"/>
</dbReference>
<dbReference type="GO" id="GO:0005634">
    <property type="term" value="C:nucleus"/>
    <property type="evidence" value="ECO:0000318"/>
    <property type="project" value="GO_Central"/>
</dbReference>
<dbReference type="GO" id="GO:0048471">
    <property type="term" value="C:perinuclear region of cytoplasm"/>
    <property type="evidence" value="ECO:0007669"/>
    <property type="project" value="UniProtKB-SubCell"/>
</dbReference>
<dbReference type="GO" id="GO:0005886">
    <property type="term" value="C:plasma membrane"/>
    <property type="evidence" value="ECO:0000318"/>
    <property type="project" value="GO_Central"/>
</dbReference>
<dbReference type="GO" id="GO:0098793">
    <property type="term" value="C:presynapse"/>
    <property type="evidence" value="ECO:0007669"/>
    <property type="project" value="GOC"/>
</dbReference>
<dbReference type="GO" id="GO:0045202">
    <property type="term" value="C:synapse"/>
    <property type="evidence" value="ECO:0000318"/>
    <property type="project" value="GO_Central"/>
</dbReference>
<dbReference type="GO" id="GO:0005525">
    <property type="term" value="F:GTP binding"/>
    <property type="evidence" value="ECO:0007669"/>
    <property type="project" value="UniProtKB-KW"/>
</dbReference>
<dbReference type="GO" id="GO:0003924">
    <property type="term" value="F:GTPase activity"/>
    <property type="evidence" value="ECO:0000318"/>
    <property type="project" value="GO_Central"/>
</dbReference>
<dbReference type="GO" id="GO:0008017">
    <property type="term" value="F:microtubule binding"/>
    <property type="evidence" value="ECO:0000318"/>
    <property type="project" value="GO_Central"/>
</dbReference>
<dbReference type="GO" id="GO:0051607">
    <property type="term" value="P:defense response to virus"/>
    <property type="evidence" value="ECO:0000318"/>
    <property type="project" value="GO_Central"/>
</dbReference>
<dbReference type="GO" id="GO:0045087">
    <property type="term" value="P:innate immune response"/>
    <property type="evidence" value="ECO:0007669"/>
    <property type="project" value="UniProtKB-KW"/>
</dbReference>
<dbReference type="GO" id="GO:0031623">
    <property type="term" value="P:receptor internalization"/>
    <property type="evidence" value="ECO:0000318"/>
    <property type="project" value="GO_Central"/>
</dbReference>
<dbReference type="GO" id="GO:0016185">
    <property type="term" value="P:synaptic vesicle budding from presynaptic endocytic zone membrane"/>
    <property type="evidence" value="ECO:0000318"/>
    <property type="project" value="GO_Central"/>
</dbReference>
<dbReference type="CDD" id="cd08771">
    <property type="entry name" value="DLP_1"/>
    <property type="match status" value="1"/>
</dbReference>
<dbReference type="FunFam" id="1.20.120.1240:FF:000007">
    <property type="entry name" value="Interferon-induced GTP-binding protein Mx1"/>
    <property type="match status" value="1"/>
</dbReference>
<dbReference type="FunFam" id="3.40.50.300:FF:000621">
    <property type="entry name" value="Interferon-induced GTP-binding protein Mx1"/>
    <property type="match status" value="1"/>
</dbReference>
<dbReference type="Gene3D" id="1.20.120.1240">
    <property type="entry name" value="Dynamin, middle domain"/>
    <property type="match status" value="1"/>
</dbReference>
<dbReference type="Gene3D" id="3.40.50.300">
    <property type="entry name" value="P-loop containing nucleotide triphosphate hydrolases"/>
    <property type="match status" value="1"/>
</dbReference>
<dbReference type="InterPro" id="IPR022812">
    <property type="entry name" value="Dynamin"/>
</dbReference>
<dbReference type="InterPro" id="IPR001401">
    <property type="entry name" value="Dynamin_GTPase"/>
</dbReference>
<dbReference type="InterPro" id="IPR019762">
    <property type="entry name" value="Dynamin_GTPase_CS"/>
</dbReference>
<dbReference type="InterPro" id="IPR045063">
    <property type="entry name" value="Dynamin_N"/>
</dbReference>
<dbReference type="InterPro" id="IPR000375">
    <property type="entry name" value="Dynamin_stalk"/>
</dbReference>
<dbReference type="InterPro" id="IPR030381">
    <property type="entry name" value="G_DYNAMIN_dom"/>
</dbReference>
<dbReference type="InterPro" id="IPR003130">
    <property type="entry name" value="GED"/>
</dbReference>
<dbReference type="InterPro" id="IPR020850">
    <property type="entry name" value="GED_dom"/>
</dbReference>
<dbReference type="InterPro" id="IPR027417">
    <property type="entry name" value="P-loop_NTPase"/>
</dbReference>
<dbReference type="PANTHER" id="PTHR11566">
    <property type="entry name" value="DYNAMIN"/>
    <property type="match status" value="1"/>
</dbReference>
<dbReference type="PANTHER" id="PTHR11566:SF217">
    <property type="entry name" value="INTERFERON-INDUCED GTP-BINDING PROTEIN MX1"/>
    <property type="match status" value="1"/>
</dbReference>
<dbReference type="Pfam" id="PF01031">
    <property type="entry name" value="Dynamin_M"/>
    <property type="match status" value="1"/>
</dbReference>
<dbReference type="Pfam" id="PF00350">
    <property type="entry name" value="Dynamin_N"/>
    <property type="match status" value="1"/>
</dbReference>
<dbReference type="Pfam" id="PF02212">
    <property type="entry name" value="GED"/>
    <property type="match status" value="1"/>
</dbReference>
<dbReference type="PRINTS" id="PR00195">
    <property type="entry name" value="DYNAMIN"/>
</dbReference>
<dbReference type="SMART" id="SM00053">
    <property type="entry name" value="DYNc"/>
    <property type="match status" value="1"/>
</dbReference>
<dbReference type="SMART" id="SM00302">
    <property type="entry name" value="GED"/>
    <property type="match status" value="1"/>
</dbReference>
<dbReference type="SUPFAM" id="SSF52540">
    <property type="entry name" value="P-loop containing nucleoside triphosphate hydrolases"/>
    <property type="match status" value="1"/>
</dbReference>
<dbReference type="PROSITE" id="PS00410">
    <property type="entry name" value="G_DYNAMIN_1"/>
    <property type="match status" value="1"/>
</dbReference>
<dbReference type="PROSITE" id="PS51718">
    <property type="entry name" value="G_DYNAMIN_2"/>
    <property type="match status" value="1"/>
</dbReference>
<dbReference type="PROSITE" id="PS51388">
    <property type="entry name" value="GED"/>
    <property type="match status" value="1"/>
</dbReference>
<gene>
    <name type="primary">MX1</name>
</gene>
<reference key="1">
    <citation type="journal article" date="1997" name="DNA Seq.">
        <title>Nucleotide sequence of equine MxA cDNA.</title>
        <authorList>
            <person name="Chesters P.M."/>
            <person name="Steele M."/>
            <person name="Purewal A."/>
            <person name="Edington N."/>
        </authorList>
    </citation>
    <scope>NUCLEOTIDE SEQUENCE [MRNA]</scope>
    <scope>INDUCTION</scope>
    <source>
        <tissue>Blood</tissue>
    </source>
</reference>
<reference key="2">
    <citation type="journal article" date="2007" name="Microbes Infect.">
        <title>The Mx GTPase family of interferon-induced antiviral proteins.</title>
        <authorList>
            <person name="Haller O."/>
            <person name="Stertz S."/>
            <person name="Kochs G."/>
        </authorList>
    </citation>
    <scope>REVIEW</scope>
    <scope>INDUCTION</scope>
</reference>
<name>MX1_HORSE</name>
<organism>
    <name type="scientific">Equus caballus</name>
    <name type="common">Horse</name>
    <dbReference type="NCBI Taxonomy" id="9796"/>
    <lineage>
        <taxon>Eukaryota</taxon>
        <taxon>Metazoa</taxon>
        <taxon>Chordata</taxon>
        <taxon>Craniata</taxon>
        <taxon>Vertebrata</taxon>
        <taxon>Euteleostomi</taxon>
        <taxon>Mammalia</taxon>
        <taxon>Eutheria</taxon>
        <taxon>Laurasiatheria</taxon>
        <taxon>Perissodactyla</taxon>
        <taxon>Equidae</taxon>
        <taxon>Equus</taxon>
    </lineage>
</organism>
<proteinExistence type="evidence at transcript level"/>